<keyword id="KW-0997">Cell inner membrane</keyword>
<keyword id="KW-1003">Cell membrane</keyword>
<keyword id="KW-0406">Ion transport</keyword>
<keyword id="KW-0472">Membrane</keyword>
<keyword id="KW-0520">NAD</keyword>
<keyword id="KW-0915">Sodium</keyword>
<keyword id="KW-0739">Sodium transport</keyword>
<keyword id="KW-1278">Translocase</keyword>
<keyword id="KW-0812">Transmembrane</keyword>
<keyword id="KW-1133">Transmembrane helix</keyword>
<keyword id="KW-0813">Transport</keyword>
<keyword id="KW-0830">Ubiquinone</keyword>
<feature type="chain" id="PRO_0000214262" description="Na(+)-translocating NADH-quinone reductase subunit E">
    <location>
        <begin position="1"/>
        <end position="198"/>
    </location>
</feature>
<feature type="transmembrane region" description="Helical" evidence="1">
    <location>
        <begin position="11"/>
        <end position="31"/>
    </location>
</feature>
<feature type="transmembrane region" description="Helical" evidence="1">
    <location>
        <begin position="39"/>
        <end position="59"/>
    </location>
</feature>
<feature type="transmembrane region" description="Helical" evidence="1">
    <location>
        <begin position="77"/>
        <end position="97"/>
    </location>
</feature>
<feature type="transmembrane region" description="Helical" evidence="1">
    <location>
        <begin position="110"/>
        <end position="130"/>
    </location>
</feature>
<feature type="transmembrane region" description="Helical" evidence="1">
    <location>
        <begin position="140"/>
        <end position="160"/>
    </location>
</feature>
<feature type="transmembrane region" description="Helical" evidence="1">
    <location>
        <begin position="176"/>
        <end position="196"/>
    </location>
</feature>
<reference key="1">
    <citation type="submission" date="2002-12" db="EMBL/GenBank/DDBJ databases">
        <title>Complete genome sequence of Vibrio vulnificus CMCP6.</title>
        <authorList>
            <person name="Rhee J.H."/>
            <person name="Kim S.Y."/>
            <person name="Chung S.S."/>
            <person name="Kim J.J."/>
            <person name="Moon Y.H."/>
            <person name="Jeong H."/>
            <person name="Choy H.E."/>
        </authorList>
    </citation>
    <scope>NUCLEOTIDE SEQUENCE [LARGE SCALE GENOMIC DNA]</scope>
    <source>
        <strain>CMCP6</strain>
    </source>
</reference>
<proteinExistence type="inferred from homology"/>
<organism>
    <name type="scientific">Vibrio vulnificus (strain CMCP6)</name>
    <dbReference type="NCBI Taxonomy" id="216895"/>
    <lineage>
        <taxon>Bacteria</taxon>
        <taxon>Pseudomonadati</taxon>
        <taxon>Pseudomonadota</taxon>
        <taxon>Gammaproteobacteria</taxon>
        <taxon>Vibrionales</taxon>
        <taxon>Vibrionaceae</taxon>
        <taxon>Vibrio</taxon>
    </lineage>
</organism>
<name>NQRE_VIBVU</name>
<evidence type="ECO:0000255" key="1">
    <source>
        <dbReference type="HAMAP-Rule" id="MF_00429"/>
    </source>
</evidence>
<dbReference type="EC" id="7.2.1.1" evidence="1"/>
<dbReference type="EMBL" id="AE016795">
    <property type="protein sequence ID" value="AAO10231.1"/>
    <property type="molecule type" value="Genomic_DNA"/>
</dbReference>
<dbReference type="RefSeq" id="WP_011079731.1">
    <property type="nucleotide sequence ID" value="NC_004459.3"/>
</dbReference>
<dbReference type="SMR" id="Q8DBJ2"/>
<dbReference type="GeneID" id="93896058"/>
<dbReference type="KEGG" id="vvu:VV1_1825"/>
<dbReference type="HOGENOM" id="CLU_095255_0_0_6"/>
<dbReference type="Proteomes" id="UP000002275">
    <property type="component" value="Chromosome 1"/>
</dbReference>
<dbReference type="GO" id="GO:0009276">
    <property type="term" value="C:Gram-negative-bacterium-type cell wall"/>
    <property type="evidence" value="ECO:0007669"/>
    <property type="project" value="InterPro"/>
</dbReference>
<dbReference type="GO" id="GO:0005886">
    <property type="term" value="C:plasma membrane"/>
    <property type="evidence" value="ECO:0007669"/>
    <property type="project" value="UniProtKB-SubCell"/>
</dbReference>
<dbReference type="GO" id="GO:0016655">
    <property type="term" value="F:oxidoreductase activity, acting on NAD(P)H, quinone or similar compound as acceptor"/>
    <property type="evidence" value="ECO:0007669"/>
    <property type="project" value="UniProtKB-UniRule"/>
</dbReference>
<dbReference type="GO" id="GO:0022904">
    <property type="term" value="P:respiratory electron transport chain"/>
    <property type="evidence" value="ECO:0007669"/>
    <property type="project" value="InterPro"/>
</dbReference>
<dbReference type="GO" id="GO:0006814">
    <property type="term" value="P:sodium ion transport"/>
    <property type="evidence" value="ECO:0007669"/>
    <property type="project" value="UniProtKB-UniRule"/>
</dbReference>
<dbReference type="HAMAP" id="MF_00429">
    <property type="entry name" value="NqrE"/>
    <property type="match status" value="1"/>
</dbReference>
<dbReference type="InterPro" id="IPR003667">
    <property type="entry name" value="NqrDE/RnfAE"/>
</dbReference>
<dbReference type="InterPro" id="IPR050133">
    <property type="entry name" value="NqrDE/RnfAE_oxidrdctase"/>
</dbReference>
<dbReference type="InterPro" id="IPR010967">
    <property type="entry name" value="NqrE"/>
</dbReference>
<dbReference type="NCBIfam" id="TIGR01940">
    <property type="entry name" value="nqrE"/>
    <property type="match status" value="1"/>
</dbReference>
<dbReference type="PANTHER" id="PTHR30335">
    <property type="entry name" value="INTEGRAL MEMBRANE PROTEIN OF SOXR-REDUCING COMPLEX"/>
    <property type="match status" value="1"/>
</dbReference>
<dbReference type="PANTHER" id="PTHR30335:SF1">
    <property type="entry name" value="NA(+)-TRANSLOCATING NADH-QUINONE REDUCTASE SUBUNIT E"/>
    <property type="match status" value="1"/>
</dbReference>
<dbReference type="Pfam" id="PF02508">
    <property type="entry name" value="Rnf-Nqr"/>
    <property type="match status" value="1"/>
</dbReference>
<dbReference type="PIRSF" id="PIRSF006102">
    <property type="entry name" value="NQR_DE"/>
    <property type="match status" value="1"/>
</dbReference>
<accession>Q8DBJ2</accession>
<gene>
    <name evidence="1" type="primary">nqrE</name>
    <name type="ordered locus">VV1_1825</name>
</gene>
<sequence length="198" mass="21510">MEHYISLLIKSIFIENMALSFFLGMCTFLAVSKKVKTSFGLGVAVVVVLTIAVPVNNLVYNLVLKENALVEGVDLSFLNFITFIGVIAALVQILEMILDRFFPPLYNALGIFLPLITVNCAIFGGVSFMVQRDYNFAESVVYGFGAGVGWMLAIVALAGIREKMKYSDVPPGLRGLGITFITVGLMALGFMSFSGVQL</sequence>
<comment type="function">
    <text evidence="1">NQR complex catalyzes the reduction of ubiquinone-1 to ubiquinol by two successive reactions, coupled with the transport of Na(+) ions from the cytoplasm to the periplasm. NqrA to NqrE are probably involved in the second step, the conversion of ubisemiquinone to ubiquinol.</text>
</comment>
<comment type="catalytic activity">
    <reaction evidence="1">
        <text>a ubiquinone + n Na(+)(in) + NADH + H(+) = a ubiquinol + n Na(+)(out) + NAD(+)</text>
        <dbReference type="Rhea" id="RHEA:47748"/>
        <dbReference type="Rhea" id="RHEA-COMP:9565"/>
        <dbReference type="Rhea" id="RHEA-COMP:9566"/>
        <dbReference type="ChEBI" id="CHEBI:15378"/>
        <dbReference type="ChEBI" id="CHEBI:16389"/>
        <dbReference type="ChEBI" id="CHEBI:17976"/>
        <dbReference type="ChEBI" id="CHEBI:29101"/>
        <dbReference type="ChEBI" id="CHEBI:57540"/>
        <dbReference type="ChEBI" id="CHEBI:57945"/>
        <dbReference type="EC" id="7.2.1.1"/>
    </reaction>
</comment>
<comment type="subunit">
    <text evidence="1">Composed of six subunits; NqrA, NqrB, NqrC, NqrD, NqrE and NqrF.</text>
</comment>
<comment type="subcellular location">
    <subcellularLocation>
        <location evidence="1">Cell inner membrane</location>
        <topology evidence="1">Multi-pass membrane protein</topology>
    </subcellularLocation>
</comment>
<comment type="similarity">
    <text evidence="1">Belongs to the NqrDE/RnfAE family.</text>
</comment>
<protein>
    <recommendedName>
        <fullName evidence="1">Na(+)-translocating NADH-quinone reductase subunit E</fullName>
        <shortName evidence="1">Na(+)-NQR subunit E</shortName>
        <shortName evidence="1">Na(+)-translocating NQR subunit E</shortName>
        <ecNumber evidence="1">7.2.1.1</ecNumber>
    </recommendedName>
    <alternativeName>
        <fullName evidence="1">NQR complex subunit E</fullName>
    </alternativeName>
    <alternativeName>
        <fullName evidence="1">NQR-1 subunit E</fullName>
    </alternativeName>
</protein>